<evidence type="ECO:0000250" key="1"/>
<evidence type="ECO:0000305" key="2"/>
<keyword id="KW-0067">ATP-binding</keyword>
<keyword id="KW-0201">Cytochrome c-type biogenesis</keyword>
<keyword id="KW-0378">Hydrolase</keyword>
<keyword id="KW-0472">Membrane</keyword>
<keyword id="KW-0547">Nucleotide-binding</keyword>
<keyword id="KW-1185">Reference proteome</keyword>
<keyword id="KW-1278">Translocase</keyword>
<keyword id="KW-0813">Transport</keyword>
<reference key="1">
    <citation type="journal article" date="2000" name="Nature">
        <title>Sequence and analysis of chromosome 1 of the plant Arabidopsis thaliana.</title>
        <authorList>
            <person name="Theologis A."/>
            <person name="Ecker J.R."/>
            <person name="Palm C.J."/>
            <person name="Federspiel N.A."/>
            <person name="Kaul S."/>
            <person name="White O."/>
            <person name="Alonso J."/>
            <person name="Altafi H."/>
            <person name="Araujo R."/>
            <person name="Bowman C.L."/>
            <person name="Brooks S.Y."/>
            <person name="Buehler E."/>
            <person name="Chan A."/>
            <person name="Chao Q."/>
            <person name="Chen H."/>
            <person name="Cheuk R.F."/>
            <person name="Chin C.W."/>
            <person name="Chung M.K."/>
            <person name="Conn L."/>
            <person name="Conway A.B."/>
            <person name="Conway A.R."/>
            <person name="Creasy T.H."/>
            <person name="Dewar K."/>
            <person name="Dunn P."/>
            <person name="Etgu P."/>
            <person name="Feldblyum T.V."/>
            <person name="Feng J.-D."/>
            <person name="Fong B."/>
            <person name="Fujii C.Y."/>
            <person name="Gill J.E."/>
            <person name="Goldsmith A.D."/>
            <person name="Haas B."/>
            <person name="Hansen N.F."/>
            <person name="Hughes B."/>
            <person name="Huizar L."/>
            <person name="Hunter J.L."/>
            <person name="Jenkins J."/>
            <person name="Johnson-Hopson C."/>
            <person name="Khan S."/>
            <person name="Khaykin E."/>
            <person name="Kim C.J."/>
            <person name="Koo H.L."/>
            <person name="Kremenetskaia I."/>
            <person name="Kurtz D.B."/>
            <person name="Kwan A."/>
            <person name="Lam B."/>
            <person name="Langin-Hooper S."/>
            <person name="Lee A."/>
            <person name="Lee J.M."/>
            <person name="Lenz C.A."/>
            <person name="Li J.H."/>
            <person name="Li Y.-P."/>
            <person name="Lin X."/>
            <person name="Liu S.X."/>
            <person name="Liu Z.A."/>
            <person name="Luros J.S."/>
            <person name="Maiti R."/>
            <person name="Marziali A."/>
            <person name="Militscher J."/>
            <person name="Miranda M."/>
            <person name="Nguyen M."/>
            <person name="Nierman W.C."/>
            <person name="Osborne B.I."/>
            <person name="Pai G."/>
            <person name="Peterson J."/>
            <person name="Pham P.K."/>
            <person name="Rizzo M."/>
            <person name="Rooney T."/>
            <person name="Rowley D."/>
            <person name="Sakano H."/>
            <person name="Salzberg S.L."/>
            <person name="Schwartz J.R."/>
            <person name="Shinn P."/>
            <person name="Southwick A.M."/>
            <person name="Sun H."/>
            <person name="Tallon L.J."/>
            <person name="Tambunga G."/>
            <person name="Toriumi M.J."/>
            <person name="Town C.D."/>
            <person name="Utterback T."/>
            <person name="Van Aken S."/>
            <person name="Vaysberg M."/>
            <person name="Vysotskaia V.S."/>
            <person name="Walker M."/>
            <person name="Wu D."/>
            <person name="Yu G."/>
            <person name="Fraser C.M."/>
            <person name="Venter J.C."/>
            <person name="Davis R.W."/>
        </authorList>
    </citation>
    <scope>NUCLEOTIDE SEQUENCE [LARGE SCALE GENOMIC DNA]</scope>
    <source>
        <strain>cv. Columbia</strain>
    </source>
</reference>
<reference key="2">
    <citation type="journal article" date="2017" name="Plant J.">
        <title>Araport11: a complete reannotation of the Arabidopsis thaliana reference genome.</title>
        <authorList>
            <person name="Cheng C.Y."/>
            <person name="Krishnakumar V."/>
            <person name="Chan A.P."/>
            <person name="Thibaud-Nissen F."/>
            <person name="Schobel S."/>
            <person name="Town C.D."/>
        </authorList>
    </citation>
    <scope>GENOME REANNOTATION</scope>
    <source>
        <strain>cv. Columbia</strain>
    </source>
</reference>
<reference key="3">
    <citation type="journal article" date="2001" name="J. Biol. Chem.">
        <title>The Arabidopsis thaliana ABC protein superfamily, a complete inventory.</title>
        <authorList>
            <person name="Sanchez-Fernandez R."/>
            <person name="Davies T.G."/>
            <person name="Coleman J.O."/>
            <person name="Rea P.A."/>
        </authorList>
    </citation>
    <scope>GENE FAMILY</scope>
    <scope>NOMENCLATURE</scope>
</reference>
<reference key="4">
    <citation type="journal article" date="2008" name="Trends Plant Sci.">
        <title>Plant ABC proteins - a unified nomenclature and updated inventory.</title>
        <authorList>
            <person name="Verrier P.J."/>
            <person name="Bird D."/>
            <person name="Burla B."/>
            <person name="Dassa E."/>
            <person name="Forestier C."/>
            <person name="Geisler M."/>
            <person name="Klein M."/>
            <person name="Kolukisaoglu H.U."/>
            <person name="Lee Y."/>
            <person name="Martinoia E."/>
            <person name="Murphy A."/>
            <person name="Rea P.A."/>
            <person name="Samuels L."/>
            <person name="Schulz B."/>
            <person name="Spalding E.J."/>
            <person name="Yazaki K."/>
            <person name="Theodoulou F.L."/>
        </authorList>
    </citation>
    <scope>GENE FAMILY</scope>
    <scope>NOMENCLATURE</scope>
</reference>
<feature type="chain" id="PRO_0000092230" description="ABC transporter I family member 1">
    <location>
        <begin position="1"/>
        <end position="229"/>
    </location>
</feature>
<feature type="domain" description="ABC transporter">
    <location>
        <begin position="11"/>
        <end position="228"/>
    </location>
</feature>
<feature type="binding site" evidence="1">
    <location>
        <begin position="43"/>
        <end position="50"/>
    </location>
    <ligand>
        <name>ATP</name>
        <dbReference type="ChEBI" id="CHEBI:30616"/>
    </ligand>
</feature>
<name>AB1I_ARATH</name>
<sequence>MSIRRPQIPRLLLQNVSCMRNAQQILRHVNVSLHDGGALVLTGTNGSGKSTFLRMLAGFSKPSAGEILWNGHDITQSGIFQQYKLQLNWISLKDAIKERFTVLDNVQWFELLENKIGKAQPALELMGLGRLVKEKSRMLSMGQRKRLQLARLLAIDRPIWLLDEPSVALDDEGVRLLEYIIAEHRKKGGIVIVATHLPIDIEDAMILRLPPRFPRKMTLIDMLDRADIS</sequence>
<dbReference type="EC" id="7.6.2.5"/>
<dbReference type="EMBL" id="AC022355">
    <property type="protein sequence ID" value="AAG52155.1"/>
    <property type="molecule type" value="Genomic_DNA"/>
</dbReference>
<dbReference type="EMBL" id="CP002684">
    <property type="protein sequence ID" value="AEE34080.1"/>
    <property type="molecule type" value="Genomic_DNA"/>
</dbReference>
<dbReference type="PIR" id="E96658">
    <property type="entry name" value="E96658"/>
</dbReference>
<dbReference type="RefSeq" id="NP_176516.1">
    <property type="nucleotide sequence ID" value="NM_105006.3"/>
</dbReference>
<dbReference type="SMR" id="Q9C8T1"/>
<dbReference type="BioGRID" id="27854">
    <property type="interactions" value="1"/>
</dbReference>
<dbReference type="FunCoup" id="Q9C8T1">
    <property type="interactions" value="70"/>
</dbReference>
<dbReference type="IntAct" id="Q9C8T1">
    <property type="interactions" value="1"/>
</dbReference>
<dbReference type="STRING" id="3702.Q9C8T1"/>
<dbReference type="TCDB" id="3.A.1.107.2">
    <property type="family name" value="the atp-binding cassette (abc) superfamily"/>
</dbReference>
<dbReference type="PaxDb" id="3702-AT1G63270.1"/>
<dbReference type="ProteomicsDB" id="245083"/>
<dbReference type="EnsemblPlants" id="AT1G63270.1">
    <property type="protein sequence ID" value="AT1G63270.1"/>
    <property type="gene ID" value="AT1G63270"/>
</dbReference>
<dbReference type="GeneID" id="842633"/>
<dbReference type="Gramene" id="AT1G63270.1">
    <property type="protein sequence ID" value="AT1G63270.1"/>
    <property type="gene ID" value="AT1G63270"/>
</dbReference>
<dbReference type="KEGG" id="ath:AT1G63270"/>
<dbReference type="Araport" id="AT1G63270"/>
<dbReference type="TAIR" id="AT1G63270">
    <property type="gene designation" value="ABCI1"/>
</dbReference>
<dbReference type="eggNOG" id="KOG0059">
    <property type="taxonomic scope" value="Eukaryota"/>
</dbReference>
<dbReference type="HOGENOM" id="CLU_000604_1_2_1"/>
<dbReference type="InParanoid" id="Q9C8T1"/>
<dbReference type="OMA" id="NLAWLCA"/>
<dbReference type="OrthoDB" id="66620at2759"/>
<dbReference type="PhylomeDB" id="Q9C8T1"/>
<dbReference type="BioCyc" id="ARA:AT1G63270-MONOMER"/>
<dbReference type="PRO" id="PR:Q9C8T1"/>
<dbReference type="Proteomes" id="UP000006548">
    <property type="component" value="Chromosome 1"/>
</dbReference>
<dbReference type="ExpressionAtlas" id="Q9C8T1">
    <property type="expression patterns" value="baseline and differential"/>
</dbReference>
<dbReference type="GO" id="GO:0016020">
    <property type="term" value="C:membrane"/>
    <property type="evidence" value="ECO:0007669"/>
    <property type="project" value="UniProtKB-SubCell"/>
</dbReference>
<dbReference type="GO" id="GO:0015439">
    <property type="term" value="F:ABC-type heme transporter activity"/>
    <property type="evidence" value="ECO:0007669"/>
    <property type="project" value="UniProtKB-EC"/>
</dbReference>
<dbReference type="GO" id="GO:0005524">
    <property type="term" value="F:ATP binding"/>
    <property type="evidence" value="ECO:0007669"/>
    <property type="project" value="UniProtKB-KW"/>
</dbReference>
<dbReference type="GO" id="GO:0016887">
    <property type="term" value="F:ATP hydrolysis activity"/>
    <property type="evidence" value="ECO:0007669"/>
    <property type="project" value="InterPro"/>
</dbReference>
<dbReference type="GO" id="GO:0017004">
    <property type="term" value="P:cytochrome complex assembly"/>
    <property type="evidence" value="ECO:0007669"/>
    <property type="project" value="UniProtKB-KW"/>
</dbReference>
<dbReference type="Gene3D" id="3.40.50.300">
    <property type="entry name" value="P-loop containing nucleotide triphosphate hydrolases"/>
    <property type="match status" value="1"/>
</dbReference>
<dbReference type="InterPro" id="IPR003593">
    <property type="entry name" value="AAA+_ATPase"/>
</dbReference>
<dbReference type="InterPro" id="IPR003439">
    <property type="entry name" value="ABC_transporter-like_ATP-bd"/>
</dbReference>
<dbReference type="InterPro" id="IPR005895">
    <property type="entry name" value="ABC_transptr_haem_export_CcmA"/>
</dbReference>
<dbReference type="InterPro" id="IPR027417">
    <property type="entry name" value="P-loop_NTPase"/>
</dbReference>
<dbReference type="NCBIfam" id="TIGR01189">
    <property type="entry name" value="ccmA"/>
    <property type="match status" value="1"/>
</dbReference>
<dbReference type="PANTHER" id="PTHR43499">
    <property type="entry name" value="ABC TRANSPORTER I FAMILY MEMBER 1"/>
    <property type="match status" value="1"/>
</dbReference>
<dbReference type="PANTHER" id="PTHR43499:SF1">
    <property type="entry name" value="ABC TRANSPORTER I FAMILY MEMBER 1"/>
    <property type="match status" value="1"/>
</dbReference>
<dbReference type="Pfam" id="PF00005">
    <property type="entry name" value="ABC_tran"/>
    <property type="match status" value="1"/>
</dbReference>
<dbReference type="SMART" id="SM00382">
    <property type="entry name" value="AAA"/>
    <property type="match status" value="1"/>
</dbReference>
<dbReference type="SUPFAM" id="SSF52540">
    <property type="entry name" value="P-loop containing nucleoside triphosphate hydrolases"/>
    <property type="match status" value="1"/>
</dbReference>
<dbReference type="PROSITE" id="PS50893">
    <property type="entry name" value="ABC_TRANSPORTER_2"/>
    <property type="match status" value="1"/>
</dbReference>
<dbReference type="PROSITE" id="PS51243">
    <property type="entry name" value="CCMA"/>
    <property type="match status" value="1"/>
</dbReference>
<proteinExistence type="evidence at transcript level"/>
<accession>Q9C8T1</accession>
<organism>
    <name type="scientific">Arabidopsis thaliana</name>
    <name type="common">Mouse-ear cress</name>
    <dbReference type="NCBI Taxonomy" id="3702"/>
    <lineage>
        <taxon>Eukaryota</taxon>
        <taxon>Viridiplantae</taxon>
        <taxon>Streptophyta</taxon>
        <taxon>Embryophyta</taxon>
        <taxon>Tracheophyta</taxon>
        <taxon>Spermatophyta</taxon>
        <taxon>Magnoliopsida</taxon>
        <taxon>eudicotyledons</taxon>
        <taxon>Gunneridae</taxon>
        <taxon>Pentapetalae</taxon>
        <taxon>rosids</taxon>
        <taxon>malvids</taxon>
        <taxon>Brassicales</taxon>
        <taxon>Brassicaceae</taxon>
        <taxon>Camelineae</taxon>
        <taxon>Arabidopsis</taxon>
    </lineage>
</organism>
<protein>
    <recommendedName>
        <fullName>ABC transporter I family member 1</fullName>
        <shortName>ABC transporter ABCI.1</shortName>
        <shortName>AtABCI1</shortName>
    </recommendedName>
    <alternativeName>
        <fullName>Cytochrome c biogenesis ATP-binding export protein ccmA-like</fullName>
    </alternativeName>
    <alternativeName>
        <fullName>MRP-related protein 3</fullName>
    </alternativeName>
    <alternativeName>
        <fullName>Putative non-intrinsic ABC protein 10</fullName>
        <ecNumber>7.6.2.5</ecNumber>
    </alternativeName>
</protein>
<gene>
    <name type="primary">ABCI1</name>
    <name type="synonym">CCMA</name>
    <name type="synonym">NAP10</name>
    <name type="ordered locus">At1g63270</name>
    <name type="ORF">F9N12.11</name>
</gene>
<comment type="function">
    <text evidence="1">Part of the ABC transporter complex CcmAB involved in the biogenesis of c-type cytochromes; once thought to export heme, this seems not to be the case, but its exact role is uncertain. Responsible for energy coupling to the transport system (By similarity).</text>
</comment>
<comment type="catalytic activity">
    <reaction>
        <text>heme b(in) + ATP + H2O = heme b(out) + ADP + phosphate + H(+)</text>
        <dbReference type="Rhea" id="RHEA:19261"/>
        <dbReference type="ChEBI" id="CHEBI:15377"/>
        <dbReference type="ChEBI" id="CHEBI:15378"/>
        <dbReference type="ChEBI" id="CHEBI:30616"/>
        <dbReference type="ChEBI" id="CHEBI:43474"/>
        <dbReference type="ChEBI" id="CHEBI:60344"/>
        <dbReference type="ChEBI" id="CHEBI:456216"/>
        <dbReference type="EC" id="7.6.2.5"/>
    </reaction>
</comment>
<comment type="subcellular location">
    <subcellularLocation>
        <location evidence="1">Membrane</location>
        <topology evidence="1">Peripheral membrane protein</topology>
    </subcellularLocation>
</comment>
<comment type="similarity">
    <text evidence="2">Belongs to the ABC transporter superfamily. ABCI family.</text>
</comment>